<sequence length="80" mass="8585">MKLSGMFLLLSLALFCFLTGVFSQGGQVDCGEFQDPKVYCTRESNPHCGSDGQTYGNKCAFCKAIVKSGGKISLKHPGKC</sequence>
<keyword id="KW-0002">3D-structure</keyword>
<keyword id="KW-0903">Direct protein sequencing</keyword>
<keyword id="KW-1015">Disulfide bond</keyword>
<keyword id="KW-0646">Protease inhibitor</keyword>
<keyword id="KW-1267">Proteomics identification</keyword>
<keyword id="KW-0873">Pyrrolidone carboxylic acid</keyword>
<keyword id="KW-1185">Reference proteome</keyword>
<keyword id="KW-0964">Secreted</keyword>
<keyword id="KW-0722">Serine protease inhibitor</keyword>
<keyword id="KW-0732">Signal</keyword>
<name>ISK6_HUMAN</name>
<accession>Q6UWN8</accession>
<accession>E0X656</accession>
<accession>Q8N5P0</accession>
<gene>
    <name type="primary">SPINK6</name>
    <name type="ORF">UNQ844/PRO1782</name>
</gene>
<reference key="1">
    <citation type="journal article" date="2010" name="J. Biol. Chem.">
        <title>Isolation of SPINK6 in human skin: selective inhibitor of kallikrein-related peptidases.</title>
        <authorList>
            <person name="Meyer-Hoffert U."/>
            <person name="Wu Z."/>
            <person name="Kantyka T."/>
            <person name="Fischer J."/>
            <person name="Latendorf T."/>
            <person name="Hansmann B."/>
            <person name="Bartels J."/>
            <person name="He Y."/>
            <person name="Glaser R."/>
            <person name="Schroder J.M."/>
        </authorList>
    </citation>
    <scope>NUCLEOTIDE SEQUENCE [MRNA]</scope>
    <scope>FUNCTION</scope>
    <scope>VARIANT THR-36</scope>
    <source>
        <tissue>Foreskin</tissue>
    </source>
</reference>
<reference key="2">
    <citation type="journal article" date="2003" name="Genome Res.">
        <title>The secreted protein discovery initiative (SPDI), a large-scale effort to identify novel human secreted and transmembrane proteins: a bioinformatics assessment.</title>
        <authorList>
            <person name="Clark H.F."/>
            <person name="Gurney A.L."/>
            <person name="Abaya E."/>
            <person name="Baker K."/>
            <person name="Baldwin D.T."/>
            <person name="Brush J."/>
            <person name="Chen J."/>
            <person name="Chow B."/>
            <person name="Chui C."/>
            <person name="Crowley C."/>
            <person name="Currell B."/>
            <person name="Deuel B."/>
            <person name="Dowd P."/>
            <person name="Eaton D."/>
            <person name="Foster J.S."/>
            <person name="Grimaldi C."/>
            <person name="Gu Q."/>
            <person name="Hass P.E."/>
            <person name="Heldens S."/>
            <person name="Huang A."/>
            <person name="Kim H.S."/>
            <person name="Klimowski L."/>
            <person name="Jin Y."/>
            <person name="Johnson S."/>
            <person name="Lee J."/>
            <person name="Lewis L."/>
            <person name="Liao D."/>
            <person name="Mark M.R."/>
            <person name="Robbie E."/>
            <person name="Sanchez C."/>
            <person name="Schoenfeld J."/>
            <person name="Seshagiri S."/>
            <person name="Simmons L."/>
            <person name="Singh J."/>
            <person name="Smith V."/>
            <person name="Stinson J."/>
            <person name="Vagts A."/>
            <person name="Vandlen R.L."/>
            <person name="Watanabe C."/>
            <person name="Wieand D."/>
            <person name="Woods K."/>
            <person name="Xie M.-H."/>
            <person name="Yansura D.G."/>
            <person name="Yi S."/>
            <person name="Yu G."/>
            <person name="Yuan J."/>
            <person name="Zhang M."/>
            <person name="Zhang Z."/>
            <person name="Goddard A.D."/>
            <person name="Wood W.I."/>
            <person name="Godowski P.J."/>
            <person name="Gray A.M."/>
        </authorList>
    </citation>
    <scope>NUCLEOTIDE SEQUENCE [LARGE SCALE MRNA]</scope>
</reference>
<reference key="3">
    <citation type="submission" date="2005-09" db="EMBL/GenBank/DDBJ databases">
        <authorList>
            <person name="Mural R.J."/>
            <person name="Istrail S."/>
            <person name="Sutton G."/>
            <person name="Florea L."/>
            <person name="Halpern A.L."/>
            <person name="Mobarry C.M."/>
            <person name="Lippert R."/>
            <person name="Walenz B."/>
            <person name="Shatkay H."/>
            <person name="Dew I."/>
            <person name="Miller J.R."/>
            <person name="Flanigan M.J."/>
            <person name="Edwards N.J."/>
            <person name="Bolanos R."/>
            <person name="Fasulo D."/>
            <person name="Halldorsson B.V."/>
            <person name="Hannenhalli S."/>
            <person name="Turner R."/>
            <person name="Yooseph S."/>
            <person name="Lu F."/>
            <person name="Nusskern D.R."/>
            <person name="Shue B.C."/>
            <person name="Zheng X.H."/>
            <person name="Zhong F."/>
            <person name="Delcher A.L."/>
            <person name="Huson D.H."/>
            <person name="Kravitz S.A."/>
            <person name="Mouchard L."/>
            <person name="Reinert K."/>
            <person name="Remington K.A."/>
            <person name="Clark A.G."/>
            <person name="Waterman M.S."/>
            <person name="Eichler E.E."/>
            <person name="Adams M.D."/>
            <person name="Hunkapiller M.W."/>
            <person name="Myers E.W."/>
            <person name="Venter J.C."/>
        </authorList>
    </citation>
    <scope>NUCLEOTIDE SEQUENCE [LARGE SCALE GENOMIC DNA]</scope>
</reference>
<reference key="4">
    <citation type="journal article" date="2004" name="Genome Res.">
        <title>The status, quality, and expansion of the NIH full-length cDNA project: the Mammalian Gene Collection (MGC).</title>
        <authorList>
            <consortium name="The MGC Project Team"/>
        </authorList>
    </citation>
    <scope>NUCLEOTIDE SEQUENCE [LARGE SCALE MRNA]</scope>
    <scope>VARIANT THR-36</scope>
    <source>
        <tissue>Skin</tissue>
    </source>
</reference>
<reference key="5">
    <citation type="journal article" date="2004" name="Protein Sci.">
        <title>Signal peptide prediction based on analysis of experimentally verified cleavage sites.</title>
        <authorList>
            <person name="Zhang Z."/>
            <person name="Henzel W.J."/>
        </authorList>
    </citation>
    <scope>PROTEIN SEQUENCE OF 24-38</scope>
</reference>
<reference key="6">
    <citation type="journal article" date="2011" name="Peptides">
        <title>Inhibition of kallikrein-related peptidases by the serine protease inhibitor of Kazal-type 6.</title>
        <authorList>
            <person name="Kantyka T."/>
            <person name="Fischer J."/>
            <person name="Wu Z."/>
            <person name="Declercq W."/>
            <person name="Reiss K."/>
            <person name="Schroder J.M."/>
            <person name="Meyer-Hoffert U."/>
        </authorList>
    </citation>
    <scope>FUNCTION</scope>
</reference>
<organism>
    <name type="scientific">Homo sapiens</name>
    <name type="common">Human</name>
    <dbReference type="NCBI Taxonomy" id="9606"/>
    <lineage>
        <taxon>Eukaryota</taxon>
        <taxon>Metazoa</taxon>
        <taxon>Chordata</taxon>
        <taxon>Craniata</taxon>
        <taxon>Vertebrata</taxon>
        <taxon>Euteleostomi</taxon>
        <taxon>Mammalia</taxon>
        <taxon>Eutheria</taxon>
        <taxon>Euarchontoglires</taxon>
        <taxon>Primates</taxon>
        <taxon>Haplorrhini</taxon>
        <taxon>Catarrhini</taxon>
        <taxon>Hominidae</taxon>
        <taxon>Homo</taxon>
    </lineage>
</organism>
<proteinExistence type="evidence at protein level"/>
<comment type="function">
    <text evidence="6 7">Serine protease inhibitor selective for kallikreins. Efficiently inhibits KLK4, KLK5, KLK6, KLK7, KLK12, KLK13 and KLK14. Doesn't inhibit KLK8.</text>
</comment>
<comment type="subcellular location">
    <subcellularLocation>
        <location evidence="2">Secreted</location>
    </subcellularLocation>
</comment>
<dbReference type="EMBL" id="GQ504704">
    <property type="protein sequence ID" value="ADM46526.1"/>
    <property type="molecule type" value="mRNA"/>
</dbReference>
<dbReference type="EMBL" id="GQ504705">
    <property type="protein sequence ID" value="ADM46527.1"/>
    <property type="molecule type" value="mRNA"/>
</dbReference>
<dbReference type="EMBL" id="AY358716">
    <property type="protein sequence ID" value="AAQ89078.1"/>
    <property type="molecule type" value="mRNA"/>
</dbReference>
<dbReference type="EMBL" id="CH471062">
    <property type="protein sequence ID" value="EAW61813.1"/>
    <property type="molecule type" value="Genomic_DNA"/>
</dbReference>
<dbReference type="EMBL" id="BC032003">
    <property type="protein sequence ID" value="AAH32003.1"/>
    <property type="molecule type" value="mRNA"/>
</dbReference>
<dbReference type="CCDS" id="CCDS34268.1"/>
<dbReference type="RefSeq" id="NP_001182219.1">
    <property type="nucleotide sequence ID" value="NM_001195290.2"/>
</dbReference>
<dbReference type="RefSeq" id="NP_995313.2">
    <property type="nucleotide sequence ID" value="NM_205841.4"/>
</dbReference>
<dbReference type="PDB" id="2N52">
    <property type="method" value="NMR"/>
    <property type="chains" value="A=21-80"/>
</dbReference>
<dbReference type="PDBsum" id="2N52"/>
<dbReference type="SMR" id="Q6UWN8"/>
<dbReference type="BioGRID" id="135647">
    <property type="interactions" value="3"/>
</dbReference>
<dbReference type="FunCoup" id="Q6UWN8">
    <property type="interactions" value="41"/>
</dbReference>
<dbReference type="STRING" id="9606.ENSP00000481309"/>
<dbReference type="DrugBank" id="DB02107">
    <property type="generic name" value="Leucine - Reduced Carbonyl"/>
</dbReference>
<dbReference type="MEROPS" id="I01.015"/>
<dbReference type="iPTMnet" id="Q6UWN8"/>
<dbReference type="PhosphoSitePlus" id="Q6UWN8"/>
<dbReference type="BioMuta" id="SPINK6"/>
<dbReference type="MassIVE" id="Q6UWN8"/>
<dbReference type="PaxDb" id="9606-ENSP00000324870"/>
<dbReference type="PeptideAtlas" id="Q6UWN8"/>
<dbReference type="ProteomicsDB" id="67506"/>
<dbReference type="Pumba" id="Q6UWN8"/>
<dbReference type="Antibodypedia" id="53308">
    <property type="antibodies" value="92 antibodies from 21 providers"/>
</dbReference>
<dbReference type="DNASU" id="404203"/>
<dbReference type="Ensembl" id="ENST00000325630.3">
    <property type="protein sequence ID" value="ENSP00000324870.2"/>
    <property type="gene ID" value="ENSG00000178172.7"/>
</dbReference>
<dbReference type="Ensembl" id="ENST00000621437.4">
    <property type="protein sequence ID" value="ENSP00000481309.1"/>
    <property type="gene ID" value="ENSG00000178172.7"/>
</dbReference>
<dbReference type="GeneID" id="404203"/>
<dbReference type="KEGG" id="hsa:404203"/>
<dbReference type="MANE-Select" id="ENST00000325630.3">
    <property type="protein sequence ID" value="ENSP00000324870.2"/>
    <property type="RefSeq nucleotide sequence ID" value="NM_205841.4"/>
    <property type="RefSeq protein sequence ID" value="NP_995313.2"/>
</dbReference>
<dbReference type="UCSC" id="uc003lpa.4">
    <property type="organism name" value="human"/>
</dbReference>
<dbReference type="AGR" id="HGNC:29486"/>
<dbReference type="CTD" id="404203"/>
<dbReference type="DisGeNET" id="404203"/>
<dbReference type="GeneCards" id="SPINK6"/>
<dbReference type="HGNC" id="HGNC:29486">
    <property type="gene designation" value="SPINK6"/>
</dbReference>
<dbReference type="HPA" id="ENSG00000178172">
    <property type="expression patterns" value="Tissue enhanced (brain, cervix, salivary gland, vagina)"/>
</dbReference>
<dbReference type="MIM" id="615868">
    <property type="type" value="gene"/>
</dbReference>
<dbReference type="neXtProt" id="NX_Q6UWN8"/>
<dbReference type="OpenTargets" id="ENSG00000178172"/>
<dbReference type="PharmGKB" id="PA134915474"/>
<dbReference type="VEuPathDB" id="HostDB:ENSG00000178172"/>
<dbReference type="eggNOG" id="KOG3649">
    <property type="taxonomic scope" value="Eukaryota"/>
</dbReference>
<dbReference type="GeneTree" id="ENSGT00530000064225"/>
<dbReference type="HOGENOM" id="CLU_169765_1_0_1"/>
<dbReference type="InParanoid" id="Q6UWN8"/>
<dbReference type="OMA" id="RESDPHC"/>
<dbReference type="OrthoDB" id="126772at2759"/>
<dbReference type="PAN-GO" id="Q6UWN8">
    <property type="GO annotations" value="5 GO annotations based on evolutionary models"/>
</dbReference>
<dbReference type="PhylomeDB" id="Q6UWN8"/>
<dbReference type="PathwayCommons" id="Q6UWN8"/>
<dbReference type="Reactome" id="R-HSA-6809371">
    <property type="pathway name" value="Formation of the cornified envelope"/>
</dbReference>
<dbReference type="BioGRID-ORCS" id="404203">
    <property type="hits" value="9 hits in 1141 CRISPR screens"/>
</dbReference>
<dbReference type="ChiTaRS" id="SPINK6">
    <property type="organism name" value="human"/>
</dbReference>
<dbReference type="GenomeRNAi" id="404203"/>
<dbReference type="Pharos" id="Q6UWN8">
    <property type="development level" value="Tbio"/>
</dbReference>
<dbReference type="PRO" id="PR:Q6UWN8"/>
<dbReference type="Proteomes" id="UP000005640">
    <property type="component" value="Chromosome 5"/>
</dbReference>
<dbReference type="RNAct" id="Q6UWN8">
    <property type="molecule type" value="protein"/>
</dbReference>
<dbReference type="Bgee" id="ENSG00000178172">
    <property type="expression patterns" value="Expressed in male germ line stem cell (sensu Vertebrata) in testis and 86 other cell types or tissues"/>
</dbReference>
<dbReference type="ExpressionAtlas" id="Q6UWN8">
    <property type="expression patterns" value="baseline and differential"/>
</dbReference>
<dbReference type="GO" id="GO:0005576">
    <property type="term" value="C:extracellular region"/>
    <property type="evidence" value="ECO:0000304"/>
    <property type="project" value="Reactome"/>
</dbReference>
<dbReference type="GO" id="GO:0004867">
    <property type="term" value="F:serine-type endopeptidase inhibitor activity"/>
    <property type="evidence" value="ECO:0007669"/>
    <property type="project" value="UniProtKB-KW"/>
</dbReference>
<dbReference type="CDD" id="cd00104">
    <property type="entry name" value="KAZAL_FS"/>
    <property type="match status" value="1"/>
</dbReference>
<dbReference type="FunFam" id="3.30.60.30:FF:000037">
    <property type="entry name" value="Ovomucoid"/>
    <property type="match status" value="1"/>
</dbReference>
<dbReference type="Gene3D" id="3.30.60.30">
    <property type="match status" value="1"/>
</dbReference>
<dbReference type="InterPro" id="IPR050159">
    <property type="entry name" value="Kazal-type_SerProtInhib"/>
</dbReference>
<dbReference type="InterPro" id="IPR002350">
    <property type="entry name" value="Kazal_dom"/>
</dbReference>
<dbReference type="InterPro" id="IPR036058">
    <property type="entry name" value="Kazal_dom_sf"/>
</dbReference>
<dbReference type="PANTHER" id="PTHR47499:SF6">
    <property type="entry name" value="SERINE PROTEASE INHIBITOR KAZAL-TYPE 6"/>
    <property type="match status" value="1"/>
</dbReference>
<dbReference type="PANTHER" id="PTHR47499">
    <property type="entry name" value="SERINE PROTEASE INHIBITOR KAZAL-TYPE 7 SPINK7"/>
    <property type="match status" value="1"/>
</dbReference>
<dbReference type="Pfam" id="PF00050">
    <property type="entry name" value="Kazal_1"/>
    <property type="match status" value="1"/>
</dbReference>
<dbReference type="SMART" id="SM00280">
    <property type="entry name" value="KAZAL"/>
    <property type="match status" value="1"/>
</dbReference>
<dbReference type="SUPFAM" id="SSF100895">
    <property type="entry name" value="Kazal-type serine protease inhibitors"/>
    <property type="match status" value="1"/>
</dbReference>
<dbReference type="PROSITE" id="PS00282">
    <property type="entry name" value="KAZAL_1"/>
    <property type="match status" value="1"/>
</dbReference>
<dbReference type="PROSITE" id="PS51465">
    <property type="entry name" value="KAZAL_2"/>
    <property type="match status" value="1"/>
</dbReference>
<feature type="signal peptide" evidence="4">
    <location>
        <begin position="1"/>
        <end position="23"/>
    </location>
</feature>
<feature type="chain" id="PRO_0000016575" description="Serine protease inhibitor Kazal-type 6">
    <location>
        <begin position="24"/>
        <end position="80"/>
    </location>
</feature>
<feature type="domain" description="Kazal-like" evidence="3">
    <location>
        <begin position="24"/>
        <end position="80"/>
    </location>
</feature>
<feature type="site" description="Reactive bond" evidence="3">
    <location>
        <begin position="42"/>
        <end position="43"/>
    </location>
</feature>
<feature type="modified residue" description="Pyrrolidone carboxylic acid" evidence="1">
    <location>
        <position position="24"/>
    </location>
</feature>
<feature type="disulfide bond" evidence="3">
    <location>
        <begin position="30"/>
        <end position="62"/>
    </location>
</feature>
<feature type="disulfide bond" evidence="3">
    <location>
        <begin position="40"/>
        <end position="59"/>
    </location>
</feature>
<feature type="disulfide bond" evidence="3">
    <location>
        <begin position="48"/>
        <end position="80"/>
    </location>
</feature>
<feature type="sequence variant" id="VAR_034020" description="In dbSNP:rs12186491." evidence="5 6">
    <original>P</original>
    <variation>T</variation>
    <location>
        <position position="36"/>
    </location>
</feature>
<feature type="strand" evidence="8">
    <location>
        <begin position="26"/>
        <end position="29"/>
    </location>
</feature>
<feature type="strand" evidence="8">
    <location>
        <begin position="34"/>
        <end position="37"/>
    </location>
</feature>
<feature type="strand" evidence="8">
    <location>
        <begin position="47"/>
        <end position="49"/>
    </location>
</feature>
<feature type="strand" evidence="8">
    <location>
        <begin position="54"/>
        <end position="57"/>
    </location>
</feature>
<feature type="helix" evidence="8">
    <location>
        <begin position="58"/>
        <end position="66"/>
    </location>
</feature>
<feature type="turn" evidence="8">
    <location>
        <begin position="67"/>
        <end position="70"/>
    </location>
</feature>
<feature type="strand" evidence="8">
    <location>
        <begin position="74"/>
        <end position="78"/>
    </location>
</feature>
<evidence type="ECO:0000250" key="1">
    <source>
        <dbReference type="UniProtKB" id="P01001"/>
    </source>
</evidence>
<evidence type="ECO:0000250" key="2">
    <source>
        <dbReference type="UniProtKB" id="Q8BT20"/>
    </source>
</evidence>
<evidence type="ECO:0000255" key="3">
    <source>
        <dbReference type="PROSITE-ProRule" id="PRU00798"/>
    </source>
</evidence>
<evidence type="ECO:0000269" key="4">
    <source>
    </source>
</evidence>
<evidence type="ECO:0000269" key="5">
    <source>
    </source>
</evidence>
<evidence type="ECO:0000269" key="6">
    <source>
    </source>
</evidence>
<evidence type="ECO:0000269" key="7">
    <source>
    </source>
</evidence>
<evidence type="ECO:0007829" key="8">
    <source>
        <dbReference type="PDB" id="2N52"/>
    </source>
</evidence>
<protein>
    <recommendedName>
        <fullName>Serine protease inhibitor Kazal-type 6</fullName>
    </recommendedName>
    <alternativeName>
        <fullName>Kallikrein inhibitor</fullName>
    </alternativeName>
</protein>